<reference key="1">
    <citation type="journal article" date="1999" name="FEMS Microbiol. Lett.">
        <title>The molybdenum cofactor biosynthesis protein MobA from Rhodobacter capsulatus is required for the activity of molybdenum enzymes containing MGD, but not for xanthine dehydrogenase harboring the MPT cofactor.</title>
        <authorList>
            <person name="Leimkuhler S."/>
            <person name="Klipp W."/>
        </authorList>
    </citation>
    <scope>NUCLEOTIDE SEQUENCE [GENOMIC DNA]</scope>
    <source>
        <strain>B10S</strain>
    </source>
</reference>
<proteinExistence type="inferred from homology"/>
<comment type="function">
    <text evidence="1">Transfers a GMP moiety from GTP to Mo-molybdopterin (Mo-MPT) cofactor (Moco or molybdenum cofactor) to form Mo-molybdopterin guanine dinucleotide (Mo-MGD) cofactor.</text>
</comment>
<comment type="catalytic activity">
    <reaction evidence="1">
        <text>Mo-molybdopterin + GTP + H(+) = Mo-molybdopterin guanine dinucleotide + diphosphate</text>
        <dbReference type="Rhea" id="RHEA:34243"/>
        <dbReference type="ChEBI" id="CHEBI:15378"/>
        <dbReference type="ChEBI" id="CHEBI:33019"/>
        <dbReference type="ChEBI" id="CHEBI:37565"/>
        <dbReference type="ChEBI" id="CHEBI:71302"/>
        <dbReference type="ChEBI" id="CHEBI:71310"/>
        <dbReference type="EC" id="2.7.7.77"/>
    </reaction>
</comment>
<comment type="cofactor">
    <cofactor evidence="1">
        <name>Mg(2+)</name>
        <dbReference type="ChEBI" id="CHEBI:18420"/>
    </cofactor>
</comment>
<comment type="subunit">
    <text evidence="1">Monomer.</text>
</comment>
<comment type="subcellular location">
    <subcellularLocation>
        <location evidence="1">Cytoplasm</location>
    </subcellularLocation>
</comment>
<comment type="domain">
    <text evidence="1">The N-terminal domain determines nucleotide recognition and specific binding, while the C-terminal domain determines the specific binding to the target protein.</text>
</comment>
<comment type="similarity">
    <text evidence="1">Belongs to the MobA family.</text>
</comment>
<comment type="sequence caution" evidence="2">
    <conflict type="frameshift">
        <sequence resource="EMBL-CDS" id="CAB43541"/>
    </conflict>
</comment>
<protein>
    <recommendedName>
        <fullName evidence="1">Molybdenum cofactor guanylyltransferase</fullName>
        <shortName evidence="1">MoCo guanylyltransferase</shortName>
        <ecNumber evidence="1">2.7.7.77</ecNumber>
    </recommendedName>
    <alternativeName>
        <fullName evidence="1">GTP:molybdopterin guanylyltransferase</fullName>
    </alternativeName>
    <alternativeName>
        <fullName evidence="1">Mo-MPT guanylyltransferase</fullName>
    </alternativeName>
    <alternativeName>
        <fullName evidence="1">Molybdopterin guanylyltransferase</fullName>
    </alternativeName>
    <alternativeName>
        <fullName evidence="1">Molybdopterin-guanine dinucleotide synthase</fullName>
        <shortName evidence="1">MGD synthase</shortName>
    </alternativeName>
</protein>
<dbReference type="EC" id="2.7.7.77" evidence="1"/>
<dbReference type="EMBL" id="AJ131528">
    <property type="protein sequence ID" value="CAB43541.1"/>
    <property type="status" value="ALT_FRAME"/>
    <property type="molecule type" value="Genomic_DNA"/>
</dbReference>
<dbReference type="SMR" id="Q9X7K0"/>
<dbReference type="IntAct" id="Q9X7K0">
    <property type="interactions" value="2"/>
</dbReference>
<dbReference type="MINT" id="Q9X7K0"/>
<dbReference type="GO" id="GO:0005737">
    <property type="term" value="C:cytoplasm"/>
    <property type="evidence" value="ECO:0007669"/>
    <property type="project" value="UniProtKB-SubCell"/>
</dbReference>
<dbReference type="GO" id="GO:0005525">
    <property type="term" value="F:GTP binding"/>
    <property type="evidence" value="ECO:0007669"/>
    <property type="project" value="UniProtKB-UniRule"/>
</dbReference>
<dbReference type="GO" id="GO:0046872">
    <property type="term" value="F:metal ion binding"/>
    <property type="evidence" value="ECO:0007669"/>
    <property type="project" value="UniProtKB-KW"/>
</dbReference>
<dbReference type="GO" id="GO:0061603">
    <property type="term" value="F:molybdenum cofactor guanylyltransferase activity"/>
    <property type="evidence" value="ECO:0007669"/>
    <property type="project" value="UniProtKB-EC"/>
</dbReference>
<dbReference type="GO" id="GO:1902758">
    <property type="term" value="P:bis(molybdopterin guanine dinucleotide)molybdenum biosynthetic process"/>
    <property type="evidence" value="ECO:0007669"/>
    <property type="project" value="TreeGrafter"/>
</dbReference>
<dbReference type="CDD" id="cd02503">
    <property type="entry name" value="MobA"/>
    <property type="match status" value="1"/>
</dbReference>
<dbReference type="Gene3D" id="3.90.550.10">
    <property type="entry name" value="Spore Coat Polysaccharide Biosynthesis Protein SpsA, Chain A"/>
    <property type="match status" value="1"/>
</dbReference>
<dbReference type="HAMAP" id="MF_00316">
    <property type="entry name" value="MobA"/>
    <property type="match status" value="1"/>
</dbReference>
<dbReference type="InterPro" id="IPR025877">
    <property type="entry name" value="MobA-like_NTP_Trfase"/>
</dbReference>
<dbReference type="InterPro" id="IPR013482">
    <property type="entry name" value="Molybde_CF_guanTrfase"/>
</dbReference>
<dbReference type="InterPro" id="IPR029044">
    <property type="entry name" value="Nucleotide-diphossugar_trans"/>
</dbReference>
<dbReference type="NCBIfam" id="TIGR02665">
    <property type="entry name" value="molyb_mobA"/>
    <property type="match status" value="1"/>
</dbReference>
<dbReference type="PANTHER" id="PTHR19136">
    <property type="entry name" value="MOLYBDENUM COFACTOR GUANYLYLTRANSFERASE"/>
    <property type="match status" value="1"/>
</dbReference>
<dbReference type="PANTHER" id="PTHR19136:SF81">
    <property type="entry name" value="MOLYBDENUM COFACTOR GUANYLYLTRANSFERASE"/>
    <property type="match status" value="1"/>
</dbReference>
<dbReference type="Pfam" id="PF12804">
    <property type="entry name" value="NTP_transf_3"/>
    <property type="match status" value="1"/>
</dbReference>
<dbReference type="SUPFAM" id="SSF53448">
    <property type="entry name" value="Nucleotide-diphospho-sugar transferases"/>
    <property type="match status" value="1"/>
</dbReference>
<keyword id="KW-0963">Cytoplasm</keyword>
<keyword id="KW-0342">GTP-binding</keyword>
<keyword id="KW-0460">Magnesium</keyword>
<keyword id="KW-0479">Metal-binding</keyword>
<keyword id="KW-0501">Molybdenum cofactor biosynthesis</keyword>
<keyword id="KW-0547">Nucleotide-binding</keyword>
<keyword id="KW-0808">Transferase</keyword>
<name>MOBA_RHOCA</name>
<feature type="chain" id="PRO_0000134906" description="Molybdenum cofactor guanylyltransferase">
    <location>
        <begin position="1"/>
        <end position="190"/>
    </location>
</feature>
<feature type="binding site" evidence="1">
    <location>
        <begin position="8"/>
        <end position="10"/>
    </location>
    <ligand>
        <name>GTP</name>
        <dbReference type="ChEBI" id="CHEBI:37565"/>
    </ligand>
</feature>
<feature type="binding site" evidence="1">
    <location>
        <position position="20"/>
    </location>
    <ligand>
        <name>GTP</name>
        <dbReference type="ChEBI" id="CHEBI:37565"/>
    </ligand>
</feature>
<feature type="binding site" evidence="1">
    <location>
        <position position="64"/>
    </location>
    <ligand>
        <name>GTP</name>
        <dbReference type="ChEBI" id="CHEBI:37565"/>
    </ligand>
</feature>
<feature type="binding site" evidence="1">
    <location>
        <position position="98"/>
    </location>
    <ligand>
        <name>GTP</name>
        <dbReference type="ChEBI" id="CHEBI:37565"/>
    </ligand>
</feature>
<feature type="binding site" evidence="1">
    <location>
        <position position="98"/>
    </location>
    <ligand>
        <name>Mg(2+)</name>
        <dbReference type="ChEBI" id="CHEBI:18420"/>
    </ligand>
</feature>
<evidence type="ECO:0000255" key="1">
    <source>
        <dbReference type="HAMAP-Rule" id="MF_00316"/>
    </source>
</evidence>
<evidence type="ECO:0000305" key="2"/>
<sequence length="190" mass="19752">MRIAGIILAGGQGRRMGREKALVPLSGVPLIARVLALAPQVEAVAISANGDPGRFGLGLPVLPDRPGESGLGPMAGIRAGLDWAAGIGAEALVSTATDTPFLPEDLVERLAAAAPAHAQSFGRDHYTAALWRVATVPRIDALFAADERRIARLSGGAVAVPFDTTPDPFANLNTPEDLARAEDRLRQNAP</sequence>
<accession>Q9X7K0</accession>
<organism>
    <name type="scientific">Rhodobacter capsulatus</name>
    <name type="common">Rhodopseudomonas capsulata</name>
    <dbReference type="NCBI Taxonomy" id="1061"/>
    <lineage>
        <taxon>Bacteria</taxon>
        <taxon>Pseudomonadati</taxon>
        <taxon>Pseudomonadota</taxon>
        <taxon>Alphaproteobacteria</taxon>
        <taxon>Rhodobacterales</taxon>
        <taxon>Rhodobacter group</taxon>
        <taxon>Rhodobacter</taxon>
    </lineage>
</organism>
<gene>
    <name evidence="1" type="primary">mobA</name>
</gene>